<accession>P67326</accession>
<accession>Q99QV2</accession>
<proteinExistence type="inferred from homology"/>
<gene>
    <name evidence="1" type="primary">trhO</name>
    <name type="ordered locus">SAV2689</name>
</gene>
<reference key="1">
    <citation type="journal article" date="2001" name="Lancet">
        <title>Whole genome sequencing of meticillin-resistant Staphylococcus aureus.</title>
        <authorList>
            <person name="Kuroda M."/>
            <person name="Ohta T."/>
            <person name="Uchiyama I."/>
            <person name="Baba T."/>
            <person name="Yuzawa H."/>
            <person name="Kobayashi I."/>
            <person name="Cui L."/>
            <person name="Oguchi A."/>
            <person name="Aoki K."/>
            <person name="Nagai Y."/>
            <person name="Lian J.-Q."/>
            <person name="Ito T."/>
            <person name="Kanamori M."/>
            <person name="Matsumaru H."/>
            <person name="Maruyama A."/>
            <person name="Murakami H."/>
            <person name="Hosoyama A."/>
            <person name="Mizutani-Ui Y."/>
            <person name="Takahashi N.K."/>
            <person name="Sawano T."/>
            <person name="Inoue R."/>
            <person name="Kaito C."/>
            <person name="Sekimizu K."/>
            <person name="Hirakawa H."/>
            <person name="Kuhara S."/>
            <person name="Goto S."/>
            <person name="Yabuzaki J."/>
            <person name="Kanehisa M."/>
            <person name="Yamashita A."/>
            <person name="Oshima K."/>
            <person name="Furuya K."/>
            <person name="Yoshino C."/>
            <person name="Shiba T."/>
            <person name="Hattori M."/>
            <person name="Ogasawara N."/>
            <person name="Hayashi H."/>
            <person name="Hiramatsu K."/>
        </authorList>
    </citation>
    <scope>NUCLEOTIDE SEQUENCE [LARGE SCALE GENOMIC DNA]</scope>
    <source>
        <strain>Mu50 / ATCC 700699</strain>
    </source>
</reference>
<protein>
    <recommendedName>
        <fullName evidence="1">tRNA uridine(34) hydroxylase</fullName>
        <ecNumber evidence="1">1.14.-.-</ecNumber>
    </recommendedName>
    <alternativeName>
        <fullName evidence="1">tRNA hydroxylation protein O</fullName>
    </alternativeName>
</protein>
<feature type="chain" id="PRO_0000161514" description="tRNA uridine(34) hydroxylase">
    <location>
        <begin position="1"/>
        <end position="318"/>
    </location>
</feature>
<feature type="domain" description="Rhodanese" evidence="1">
    <location>
        <begin position="123"/>
        <end position="217"/>
    </location>
</feature>
<feature type="active site" description="Cysteine persulfide intermediate" evidence="1">
    <location>
        <position position="177"/>
    </location>
</feature>
<organism>
    <name type="scientific">Staphylococcus aureus (strain Mu50 / ATCC 700699)</name>
    <dbReference type="NCBI Taxonomy" id="158878"/>
    <lineage>
        <taxon>Bacteria</taxon>
        <taxon>Bacillati</taxon>
        <taxon>Bacillota</taxon>
        <taxon>Bacilli</taxon>
        <taxon>Bacillales</taxon>
        <taxon>Staphylococcaceae</taxon>
        <taxon>Staphylococcus</taxon>
    </lineage>
</organism>
<name>TRHO_STAAM</name>
<sequence length="318" mass="37057">MNYQVLLYYKYTTIDDPEQFAQDHLAFCKAHHLKGRILVSTEGINGTLSGTKEETEQYMAHMHADERFKDMVFKIDEAEGHAFKKMHVRPRKEIVALDLEDDVDPRHTTGQYLSPVEFRKALEDDDTVIIDARNDYEFDLGHFRGAIRPDITRFRDLPDWIKENKALFTDKKVVTYCTGGIRCEKFSGWLLKEGFEDVAQLHGGIATYGKDPETKGQYWDGKMYVFDDRISVDINQVEKTIIGKDWFDGKPCERYINCANPECNKQILVSEENETKYLGACSYECAKHERNRYVQANNISDNEWQQRLTNFDDLHQHA</sequence>
<comment type="function">
    <text evidence="1">Catalyzes oxygen-dependent 5-hydroxyuridine (ho5U) modification at position 34 in tRNAs.</text>
</comment>
<comment type="catalytic activity">
    <reaction evidence="1">
        <text>uridine(34) in tRNA + AH2 + O2 = 5-hydroxyuridine(34) in tRNA + A + H2O</text>
        <dbReference type="Rhea" id="RHEA:64224"/>
        <dbReference type="Rhea" id="RHEA-COMP:11727"/>
        <dbReference type="Rhea" id="RHEA-COMP:13381"/>
        <dbReference type="ChEBI" id="CHEBI:13193"/>
        <dbReference type="ChEBI" id="CHEBI:15377"/>
        <dbReference type="ChEBI" id="CHEBI:15379"/>
        <dbReference type="ChEBI" id="CHEBI:17499"/>
        <dbReference type="ChEBI" id="CHEBI:65315"/>
        <dbReference type="ChEBI" id="CHEBI:136877"/>
    </reaction>
</comment>
<comment type="similarity">
    <text evidence="1">Belongs to the TrhO family.</text>
</comment>
<keyword id="KW-0560">Oxidoreductase</keyword>
<keyword id="KW-0819">tRNA processing</keyword>
<evidence type="ECO:0000255" key="1">
    <source>
        <dbReference type="HAMAP-Rule" id="MF_00469"/>
    </source>
</evidence>
<dbReference type="EC" id="1.14.-.-" evidence="1"/>
<dbReference type="EMBL" id="BA000017">
    <property type="protein sequence ID" value="BAB58851.1"/>
    <property type="molecule type" value="Genomic_DNA"/>
</dbReference>
<dbReference type="RefSeq" id="WP_001109281.1">
    <property type="nucleotide sequence ID" value="NC_002758.2"/>
</dbReference>
<dbReference type="SMR" id="P67326"/>
<dbReference type="KEGG" id="sav:SAV2689"/>
<dbReference type="HOGENOM" id="CLU_038878_1_0_9"/>
<dbReference type="PhylomeDB" id="P67326"/>
<dbReference type="Proteomes" id="UP000002481">
    <property type="component" value="Chromosome"/>
</dbReference>
<dbReference type="GO" id="GO:0016705">
    <property type="term" value="F:oxidoreductase activity, acting on paired donors, with incorporation or reduction of molecular oxygen"/>
    <property type="evidence" value="ECO:0007669"/>
    <property type="project" value="UniProtKB-UniRule"/>
</dbReference>
<dbReference type="GO" id="GO:0006400">
    <property type="term" value="P:tRNA modification"/>
    <property type="evidence" value="ECO:0007669"/>
    <property type="project" value="UniProtKB-UniRule"/>
</dbReference>
<dbReference type="CDD" id="cd01518">
    <property type="entry name" value="RHOD_YceA"/>
    <property type="match status" value="1"/>
</dbReference>
<dbReference type="Gene3D" id="3.30.70.100">
    <property type="match status" value="1"/>
</dbReference>
<dbReference type="Gene3D" id="3.40.250.10">
    <property type="entry name" value="Rhodanese-like domain"/>
    <property type="match status" value="1"/>
</dbReference>
<dbReference type="HAMAP" id="MF_00469">
    <property type="entry name" value="TrhO"/>
    <property type="match status" value="1"/>
</dbReference>
<dbReference type="InterPro" id="IPR001763">
    <property type="entry name" value="Rhodanese-like_dom"/>
</dbReference>
<dbReference type="InterPro" id="IPR036873">
    <property type="entry name" value="Rhodanese-like_dom_sf"/>
</dbReference>
<dbReference type="InterPro" id="IPR022111">
    <property type="entry name" value="Rhodanese_C"/>
</dbReference>
<dbReference type="InterPro" id="IPR020936">
    <property type="entry name" value="TrhO"/>
</dbReference>
<dbReference type="InterPro" id="IPR040503">
    <property type="entry name" value="TRHO_N"/>
</dbReference>
<dbReference type="NCBIfam" id="NF001135">
    <property type="entry name" value="PRK00142.1-3"/>
    <property type="match status" value="1"/>
</dbReference>
<dbReference type="PANTHER" id="PTHR43268:SF3">
    <property type="entry name" value="RHODANESE-LIKE DOMAIN-CONTAINING PROTEIN 7-RELATED"/>
    <property type="match status" value="1"/>
</dbReference>
<dbReference type="PANTHER" id="PTHR43268">
    <property type="entry name" value="THIOSULFATE SULFURTRANSFERASE/RHODANESE-LIKE DOMAIN-CONTAINING PROTEIN 2"/>
    <property type="match status" value="1"/>
</dbReference>
<dbReference type="Pfam" id="PF00581">
    <property type="entry name" value="Rhodanese"/>
    <property type="match status" value="1"/>
</dbReference>
<dbReference type="Pfam" id="PF12368">
    <property type="entry name" value="Rhodanese_C"/>
    <property type="match status" value="1"/>
</dbReference>
<dbReference type="Pfam" id="PF17773">
    <property type="entry name" value="UPF0176_N"/>
    <property type="match status" value="1"/>
</dbReference>
<dbReference type="SMART" id="SM00450">
    <property type="entry name" value="RHOD"/>
    <property type="match status" value="1"/>
</dbReference>
<dbReference type="SUPFAM" id="SSF52821">
    <property type="entry name" value="Rhodanese/Cell cycle control phosphatase"/>
    <property type="match status" value="1"/>
</dbReference>
<dbReference type="PROSITE" id="PS50206">
    <property type="entry name" value="RHODANESE_3"/>
    <property type="match status" value="1"/>
</dbReference>